<keyword id="KW-1003">Cell membrane</keyword>
<keyword id="KW-0342">GTP-binding</keyword>
<keyword id="KW-0378">Hydrolase</keyword>
<keyword id="KW-0449">Lipoprotein</keyword>
<keyword id="KW-0472">Membrane</keyword>
<keyword id="KW-0488">Methylation</keyword>
<keyword id="KW-0547">Nucleotide-binding</keyword>
<keyword id="KW-0597">Phosphoprotein</keyword>
<keyword id="KW-0636">Prenylation</keyword>
<name>RAS_GEOCY</name>
<organism>
    <name type="scientific">Geodia cydonium</name>
    <name type="common">Sponge</name>
    <dbReference type="NCBI Taxonomy" id="6047"/>
    <lineage>
        <taxon>Eukaryota</taxon>
        <taxon>Metazoa</taxon>
        <taxon>Porifera</taxon>
        <taxon>Demospongiae</taxon>
        <taxon>Heteroscleromorpha</taxon>
        <taxon>Tetractinellida</taxon>
        <taxon>Astrophorina</taxon>
        <taxon>Geodiidae</taxon>
        <taxon>Geodia</taxon>
    </lineage>
</organism>
<evidence type="ECO:0000250" key="1"/>
<evidence type="ECO:0000250" key="2">
    <source>
        <dbReference type="UniProtKB" id="P01112"/>
    </source>
</evidence>
<evidence type="ECO:0000255" key="3"/>
<evidence type="ECO:0000305" key="4"/>
<comment type="function">
    <text>This protein is activated by the insulin/insulin (insulin-like)-receptor system. This transition enables the ras protein to interact with the lectin-receptor/lectin complex, a process which ultimately lead to an initiation of an intra-cellular signal-transduction chain.</text>
</comment>
<comment type="catalytic activity">
    <reaction evidence="2">
        <text>GTP + H2O = GDP + phosphate + H(+)</text>
        <dbReference type="Rhea" id="RHEA:19669"/>
        <dbReference type="ChEBI" id="CHEBI:15377"/>
        <dbReference type="ChEBI" id="CHEBI:15378"/>
        <dbReference type="ChEBI" id="CHEBI:37565"/>
        <dbReference type="ChEBI" id="CHEBI:43474"/>
        <dbReference type="ChEBI" id="CHEBI:58189"/>
        <dbReference type="EC" id="3.6.5.2"/>
    </reaction>
</comment>
<comment type="activity regulation">
    <text>Alternates between an inactive form bound to GDP and an active form bound to GTP. Activated by a guanine nucleotide-exchange factor (GEF) and inactivated by a GTPase-activating protein (GAP).</text>
</comment>
<comment type="subcellular location">
    <subcellularLocation>
        <location evidence="4">Cell membrane</location>
        <topology evidence="4">Lipid-anchor</topology>
        <orientation evidence="4">Cytoplasmic side</orientation>
    </subcellularLocation>
</comment>
<comment type="PTM">
    <text>Phosphorylated in the presence of insulin.</text>
</comment>
<comment type="similarity">
    <text evidence="4">Belongs to the small GTPase superfamily. Ras family.</text>
</comment>
<sequence length="209" mass="23854">MTEYKIVIVGGGLVGKSALTLQLVQVCIKDQYYLIEFQNNQFQFENLQNHYIDEYDPTVEDSRREVSIDDQTCLLNILDTAGQQHSNAQSMDAHWSTVFVCLFNYFNITSMYDEIASFREQILRVKDGAKDLVPLILIINKADLDHESQGSGNEGQLAKDSLSFHQSSAKSRINLEEIPYSLVRELRKELKLDQSSGKAQKKKKQCLII</sequence>
<proteinExistence type="evidence at transcript level"/>
<feature type="chain" id="PRO_0000082669" description="Ras-like protein">
    <location>
        <begin position="1"/>
        <end position="206"/>
    </location>
</feature>
<feature type="propeptide" id="PRO_0000281317" description="Removed in mature form" evidence="1">
    <location>
        <begin position="207"/>
        <end position="209"/>
    </location>
</feature>
<feature type="short sequence motif" description="Effector region">
    <location>
        <begin position="55"/>
        <end position="63"/>
    </location>
</feature>
<feature type="binding site" evidence="1">
    <location>
        <begin position="10"/>
        <end position="17"/>
    </location>
    <ligand>
        <name>GTP</name>
        <dbReference type="ChEBI" id="CHEBI:37565"/>
    </ligand>
</feature>
<feature type="binding site" evidence="1">
    <location>
        <begin position="79"/>
        <end position="83"/>
    </location>
    <ligand>
        <name>GTP</name>
        <dbReference type="ChEBI" id="CHEBI:37565"/>
    </ligand>
</feature>
<feature type="binding site" evidence="1">
    <location>
        <begin position="140"/>
        <end position="143"/>
    </location>
    <ligand>
        <name>GTP</name>
        <dbReference type="ChEBI" id="CHEBI:37565"/>
    </ligand>
</feature>
<feature type="modified residue" description="Phosphothreonine" evidence="3">
    <location>
        <position position="58"/>
    </location>
</feature>
<feature type="modified residue" description="Cysteine methyl ester" evidence="1">
    <location>
        <position position="206"/>
    </location>
</feature>
<feature type="lipid moiety-binding region" description="S-geranylgeranyl cysteine" evidence="1">
    <location>
        <position position="206"/>
    </location>
</feature>
<reference key="1">
    <citation type="journal article" date="1990" name="Eur. J. Biochem.">
        <title>Regulated expression and phosphorylation of the 23-26-kDa ras protein in the sponge Geodia cydonium.</title>
        <authorList>
            <person name="Robitzki A."/>
            <person name="Schroeder H.C."/>
            <person name="Ugarkovic D."/>
            <person name="Kuchino Y."/>
            <person name="Kurelec B."/>
            <person name="Gamulin V."/>
            <person name="Mueller W.E.G."/>
        </authorList>
    </citation>
    <scope>NUCLEOTIDE SEQUENCE [MRNA]</scope>
</reference>
<accession>P24498</accession>
<protein>
    <recommendedName>
        <fullName>Ras-like protein</fullName>
        <ecNumber evidence="2">3.6.5.2</ecNumber>
    </recommendedName>
</protein>
<dbReference type="EC" id="3.6.5.2" evidence="2"/>
<dbReference type="EMBL" id="M30929">
    <property type="status" value="NOT_ANNOTATED_CDS"/>
    <property type="molecule type" value="mRNA"/>
</dbReference>
<dbReference type="PIR" id="S13179">
    <property type="entry name" value="S13179"/>
</dbReference>
<dbReference type="SMR" id="P24498"/>
<dbReference type="GO" id="GO:0005886">
    <property type="term" value="C:plasma membrane"/>
    <property type="evidence" value="ECO:0007669"/>
    <property type="project" value="UniProtKB-SubCell"/>
</dbReference>
<dbReference type="GO" id="GO:0003925">
    <property type="term" value="F:G protein activity"/>
    <property type="evidence" value="ECO:0007669"/>
    <property type="project" value="UniProtKB-EC"/>
</dbReference>
<dbReference type="GO" id="GO:0005525">
    <property type="term" value="F:GTP binding"/>
    <property type="evidence" value="ECO:0007669"/>
    <property type="project" value="UniProtKB-KW"/>
</dbReference>
<dbReference type="GO" id="GO:0007165">
    <property type="term" value="P:signal transduction"/>
    <property type="evidence" value="ECO:0007669"/>
    <property type="project" value="InterPro"/>
</dbReference>
<dbReference type="CDD" id="cd04139">
    <property type="entry name" value="RalA_RalB"/>
    <property type="match status" value="1"/>
</dbReference>
<dbReference type="Gene3D" id="3.40.50.300">
    <property type="entry name" value="P-loop containing nucleotide triphosphate hydrolases"/>
    <property type="match status" value="1"/>
</dbReference>
<dbReference type="InterPro" id="IPR027417">
    <property type="entry name" value="P-loop_NTPase"/>
</dbReference>
<dbReference type="InterPro" id="IPR001806">
    <property type="entry name" value="Small_GTPase"/>
</dbReference>
<dbReference type="InterPro" id="IPR020849">
    <property type="entry name" value="Small_GTPase_Ras-type"/>
</dbReference>
<dbReference type="PANTHER" id="PTHR24070">
    <property type="entry name" value="RAS, DI-RAS, AND RHEB FAMILY MEMBERS OF SMALL GTPASE SUPERFAMILY"/>
    <property type="match status" value="1"/>
</dbReference>
<dbReference type="Pfam" id="PF00071">
    <property type="entry name" value="Ras"/>
    <property type="match status" value="1"/>
</dbReference>
<dbReference type="PRINTS" id="PR00449">
    <property type="entry name" value="RASTRNSFRMNG"/>
</dbReference>
<dbReference type="SMART" id="SM00175">
    <property type="entry name" value="RAB"/>
    <property type="match status" value="1"/>
</dbReference>
<dbReference type="SMART" id="SM00173">
    <property type="entry name" value="RAS"/>
    <property type="match status" value="1"/>
</dbReference>
<dbReference type="SUPFAM" id="SSF52540">
    <property type="entry name" value="P-loop containing nucleoside triphosphate hydrolases"/>
    <property type="match status" value="1"/>
</dbReference>
<dbReference type="PROSITE" id="PS51421">
    <property type="entry name" value="RAS"/>
    <property type="match status" value="1"/>
</dbReference>